<evidence type="ECO:0000250" key="1"/>
<evidence type="ECO:0000255" key="2">
    <source>
        <dbReference type="PROSITE-ProRule" id="PRU00108"/>
    </source>
</evidence>
<evidence type="ECO:0000256" key="3">
    <source>
        <dbReference type="SAM" id="MobiDB-lite"/>
    </source>
</evidence>
<evidence type="ECO:0000305" key="4"/>
<proteinExistence type="inferred from homology"/>
<reference key="1">
    <citation type="submission" date="2005-08" db="EMBL/GenBank/DDBJ databases">
        <title>Comparative genomics reveal functional transcriptional control sequences in the Prop1 gene.</title>
        <authorList>
            <person name="Camper S.A."/>
            <person name="Ward R.D."/>
            <person name="Cho M."/>
            <person name="Esposito C."/>
            <person name="Lyons R.H."/>
            <person name="Cheng J.-F."/>
            <person name="Rubin E.M."/>
            <person name="Rhodes S.J."/>
            <person name="Raetzman L.T."/>
            <person name="Smith T.P.L."/>
        </authorList>
    </citation>
    <scope>NUCLEOTIDE SEQUENCE [GENOMIC DNA]</scope>
</reference>
<keyword id="KW-0238">DNA-binding</keyword>
<keyword id="KW-0371">Homeobox</keyword>
<keyword id="KW-0539">Nucleus</keyword>
<keyword id="KW-1185">Reference proteome</keyword>
<gene>
    <name type="primary">PROP1</name>
</gene>
<sequence>MEAERRRQAEKPKKGQVGSSLLPERHPAAGTLTTMVDSSAPPCRRLPGAGVGRPRFSPQGGQRGRPHSRRRHRTTFSPVQLEQLESAFGRNQYPDIWARESLARDTGLSEARIQVWFQNRRAKQRKQERSLLQPLAHLSPAAFSSFLPESSACPYSYAPPPPPVTCFPHPYSHALPSQPSTGGAFALPHQSEDWYPTLHPTPAGHLPCPPPPPMLPLSLEPSKSWN</sequence>
<protein>
    <recommendedName>
        <fullName>Homeobox protein prophet of Pit-1</fullName>
        <shortName>PROP-1</shortName>
    </recommendedName>
    <alternativeName>
        <fullName>Pituitary-specific homeodomain factor</fullName>
    </alternativeName>
</protein>
<comment type="function">
    <text evidence="1">Possibly involved in the ontogenesis of pituitary gonadotropes, as well as somatotropes, lactotropes and caudomedial thyrotropes.</text>
</comment>
<comment type="subcellular location">
    <subcellularLocation>
        <location evidence="2">Nucleus</location>
    </subcellularLocation>
</comment>
<comment type="similarity">
    <text evidence="4">Belongs to the paired homeobox family.</text>
</comment>
<dbReference type="EMBL" id="DQ177424">
    <property type="protein sequence ID" value="ABA26451.1"/>
    <property type="molecule type" value="Genomic_DNA"/>
</dbReference>
<dbReference type="RefSeq" id="XP_025245083.1">
    <property type="nucleotide sequence ID" value="XM_025389298.1"/>
</dbReference>
<dbReference type="SMR" id="Q3LU41"/>
<dbReference type="Ensembl" id="ENSTGET00000024340.1">
    <property type="protein sequence ID" value="ENSTGEP00000020455.1"/>
    <property type="gene ID" value="ENSTGEG00000016438.1"/>
</dbReference>
<dbReference type="GeneID" id="112626898"/>
<dbReference type="Proteomes" id="UP000694411">
    <property type="component" value="Chromosome 6"/>
</dbReference>
<dbReference type="GO" id="GO:0005634">
    <property type="term" value="C:nucleus"/>
    <property type="evidence" value="ECO:0007669"/>
    <property type="project" value="UniProtKB-SubCell"/>
</dbReference>
<dbReference type="GO" id="GO:0005667">
    <property type="term" value="C:transcription regulator complex"/>
    <property type="evidence" value="ECO:0007669"/>
    <property type="project" value="TreeGrafter"/>
</dbReference>
<dbReference type="GO" id="GO:0000981">
    <property type="term" value="F:DNA-binding transcription factor activity, RNA polymerase II-specific"/>
    <property type="evidence" value="ECO:0007669"/>
    <property type="project" value="InterPro"/>
</dbReference>
<dbReference type="GO" id="GO:0000978">
    <property type="term" value="F:RNA polymerase II cis-regulatory region sequence-specific DNA binding"/>
    <property type="evidence" value="ECO:0007669"/>
    <property type="project" value="TreeGrafter"/>
</dbReference>
<dbReference type="GO" id="GO:0021983">
    <property type="term" value="P:pituitary gland development"/>
    <property type="evidence" value="ECO:0007669"/>
    <property type="project" value="InterPro"/>
</dbReference>
<dbReference type="CDD" id="cd00086">
    <property type="entry name" value="homeodomain"/>
    <property type="match status" value="1"/>
</dbReference>
<dbReference type="FunFam" id="1.10.10.60:FF:000138">
    <property type="entry name" value="Homeobox protein prophet of Pit-1"/>
    <property type="match status" value="1"/>
</dbReference>
<dbReference type="Gene3D" id="1.10.10.60">
    <property type="entry name" value="Homeodomain-like"/>
    <property type="match status" value="1"/>
</dbReference>
<dbReference type="InterPro" id="IPR001356">
    <property type="entry name" value="HD"/>
</dbReference>
<dbReference type="InterPro" id="IPR017970">
    <property type="entry name" value="Homeobox_CS"/>
</dbReference>
<dbReference type="InterPro" id="IPR009057">
    <property type="entry name" value="Homeodomain-like_sf"/>
</dbReference>
<dbReference type="InterPro" id="IPR000047">
    <property type="entry name" value="HTH_motif"/>
</dbReference>
<dbReference type="InterPro" id="IPR042412">
    <property type="entry name" value="PROP1"/>
</dbReference>
<dbReference type="PANTHER" id="PTHR47409">
    <property type="entry name" value="HOMEOBOX PROTEIN PROPHET OF PIT-1"/>
    <property type="match status" value="1"/>
</dbReference>
<dbReference type="PANTHER" id="PTHR47409:SF1">
    <property type="entry name" value="HOMEOBOX PROTEIN PROPHET OF PIT-1"/>
    <property type="match status" value="1"/>
</dbReference>
<dbReference type="Pfam" id="PF00046">
    <property type="entry name" value="Homeodomain"/>
    <property type="match status" value="1"/>
</dbReference>
<dbReference type="PRINTS" id="PR00031">
    <property type="entry name" value="HTHREPRESSR"/>
</dbReference>
<dbReference type="SMART" id="SM00389">
    <property type="entry name" value="HOX"/>
    <property type="match status" value="1"/>
</dbReference>
<dbReference type="SUPFAM" id="SSF46689">
    <property type="entry name" value="Homeodomain-like"/>
    <property type="match status" value="1"/>
</dbReference>
<dbReference type="PROSITE" id="PS00027">
    <property type="entry name" value="HOMEOBOX_1"/>
    <property type="match status" value="1"/>
</dbReference>
<dbReference type="PROSITE" id="PS50071">
    <property type="entry name" value="HOMEOBOX_2"/>
    <property type="match status" value="1"/>
</dbReference>
<feature type="chain" id="PRO_0000049274" description="Homeobox protein prophet of Pit-1">
    <location>
        <begin position="1"/>
        <end position="226"/>
    </location>
</feature>
<feature type="DNA-binding region" description="Homeobox" evidence="2">
    <location>
        <begin position="69"/>
        <end position="128"/>
    </location>
</feature>
<feature type="region of interest" description="Disordered" evidence="3">
    <location>
        <begin position="1"/>
        <end position="75"/>
    </location>
</feature>
<feature type="region of interest" description="Disordered" evidence="3">
    <location>
        <begin position="181"/>
        <end position="226"/>
    </location>
</feature>
<feature type="compositionally biased region" description="Basic and acidic residues" evidence="3">
    <location>
        <begin position="1"/>
        <end position="13"/>
    </location>
</feature>
<feature type="compositionally biased region" description="Basic residues" evidence="3">
    <location>
        <begin position="64"/>
        <end position="74"/>
    </location>
</feature>
<feature type="compositionally biased region" description="Low complexity" evidence="3">
    <location>
        <begin position="216"/>
        <end position="226"/>
    </location>
</feature>
<organism>
    <name type="scientific">Theropithecus gelada</name>
    <name type="common">Gelada baboon</name>
    <dbReference type="NCBI Taxonomy" id="9565"/>
    <lineage>
        <taxon>Eukaryota</taxon>
        <taxon>Metazoa</taxon>
        <taxon>Chordata</taxon>
        <taxon>Craniata</taxon>
        <taxon>Vertebrata</taxon>
        <taxon>Euteleostomi</taxon>
        <taxon>Mammalia</taxon>
        <taxon>Eutheria</taxon>
        <taxon>Euarchontoglires</taxon>
        <taxon>Primates</taxon>
        <taxon>Haplorrhini</taxon>
        <taxon>Catarrhini</taxon>
        <taxon>Cercopithecidae</taxon>
        <taxon>Cercopithecinae</taxon>
        <taxon>Theropithecus</taxon>
    </lineage>
</organism>
<name>PROP1_THEGE</name>
<accession>Q3LU41</accession>